<gene>
    <name evidence="1" type="primary">hemA</name>
    <name type="ordered locus">Dde_2025</name>
</gene>
<evidence type="ECO:0000255" key="1">
    <source>
        <dbReference type="HAMAP-Rule" id="MF_00087"/>
    </source>
</evidence>
<evidence type="ECO:0000256" key="2">
    <source>
        <dbReference type="SAM" id="MobiDB-lite"/>
    </source>
</evidence>
<protein>
    <recommendedName>
        <fullName evidence="1">Glutamyl-tRNA reductase</fullName>
        <shortName evidence="1">GluTR</shortName>
        <ecNumber evidence="1">1.2.1.70</ecNumber>
    </recommendedName>
</protein>
<organism>
    <name type="scientific">Oleidesulfovibrio alaskensis (strain ATCC BAA-1058 / DSM 17464 / G20)</name>
    <name type="common">Desulfovibrio alaskensis</name>
    <dbReference type="NCBI Taxonomy" id="207559"/>
    <lineage>
        <taxon>Bacteria</taxon>
        <taxon>Pseudomonadati</taxon>
        <taxon>Thermodesulfobacteriota</taxon>
        <taxon>Desulfovibrionia</taxon>
        <taxon>Desulfovibrionales</taxon>
        <taxon>Desulfovibrionaceae</taxon>
        <taxon>Oleidesulfovibrio</taxon>
    </lineage>
</organism>
<reference key="1">
    <citation type="journal article" date="2011" name="J. Bacteriol.">
        <title>Complete genome sequence and updated annotation of Desulfovibrio alaskensis G20.</title>
        <authorList>
            <person name="Hauser L.J."/>
            <person name="Land M.L."/>
            <person name="Brown S.D."/>
            <person name="Larimer F."/>
            <person name="Keller K.L."/>
            <person name="Rapp-Giles B.J."/>
            <person name="Price M.N."/>
            <person name="Lin M."/>
            <person name="Bruce D.C."/>
            <person name="Detter J.C."/>
            <person name="Tapia R."/>
            <person name="Han C.S."/>
            <person name="Goodwin L.A."/>
            <person name="Cheng J.F."/>
            <person name="Pitluck S."/>
            <person name="Copeland A."/>
            <person name="Lucas S."/>
            <person name="Nolan M."/>
            <person name="Lapidus A.L."/>
            <person name="Palumbo A.V."/>
            <person name="Wall J.D."/>
        </authorList>
    </citation>
    <scope>NUCLEOTIDE SEQUENCE [LARGE SCALE GENOMIC DNA]</scope>
    <source>
        <strain>ATCC BAA-1058 / DSM 17464 / G20</strain>
    </source>
</reference>
<accession>Q30ZS4</accession>
<feature type="chain" id="PRO_1000004616" description="Glutamyl-tRNA reductase">
    <location>
        <begin position="1"/>
        <end position="450"/>
    </location>
</feature>
<feature type="region of interest" description="Disordered" evidence="2">
    <location>
        <begin position="422"/>
        <end position="450"/>
    </location>
</feature>
<feature type="active site" description="Nucleophile" evidence="1">
    <location>
        <position position="51"/>
    </location>
</feature>
<feature type="binding site" evidence="1">
    <location>
        <begin position="50"/>
        <end position="53"/>
    </location>
    <ligand>
        <name>substrate</name>
    </ligand>
</feature>
<feature type="binding site" evidence="1">
    <location>
        <position position="109"/>
    </location>
    <ligand>
        <name>substrate</name>
    </ligand>
</feature>
<feature type="binding site" evidence="1">
    <location>
        <begin position="114"/>
        <end position="116"/>
    </location>
    <ligand>
        <name>substrate</name>
    </ligand>
</feature>
<feature type="binding site" evidence="1">
    <location>
        <position position="120"/>
    </location>
    <ligand>
        <name>substrate</name>
    </ligand>
</feature>
<feature type="binding site" evidence="1">
    <location>
        <begin position="189"/>
        <end position="194"/>
    </location>
    <ligand>
        <name>NADP(+)</name>
        <dbReference type="ChEBI" id="CHEBI:58349"/>
    </ligand>
</feature>
<feature type="site" description="Important for activity" evidence="1">
    <location>
        <position position="99"/>
    </location>
</feature>
<comment type="function">
    <text evidence="1">Catalyzes the NADPH-dependent reduction of glutamyl-tRNA(Glu) to glutamate 1-semialdehyde (GSA).</text>
</comment>
<comment type="catalytic activity">
    <reaction evidence="1">
        <text>(S)-4-amino-5-oxopentanoate + tRNA(Glu) + NADP(+) = L-glutamyl-tRNA(Glu) + NADPH + H(+)</text>
        <dbReference type="Rhea" id="RHEA:12344"/>
        <dbReference type="Rhea" id="RHEA-COMP:9663"/>
        <dbReference type="Rhea" id="RHEA-COMP:9680"/>
        <dbReference type="ChEBI" id="CHEBI:15378"/>
        <dbReference type="ChEBI" id="CHEBI:57501"/>
        <dbReference type="ChEBI" id="CHEBI:57783"/>
        <dbReference type="ChEBI" id="CHEBI:58349"/>
        <dbReference type="ChEBI" id="CHEBI:78442"/>
        <dbReference type="ChEBI" id="CHEBI:78520"/>
        <dbReference type="EC" id="1.2.1.70"/>
    </reaction>
</comment>
<comment type="pathway">
    <text evidence="1">Porphyrin-containing compound metabolism; protoporphyrin-IX biosynthesis; 5-aminolevulinate from L-glutamyl-tRNA(Glu): step 1/2.</text>
</comment>
<comment type="subunit">
    <text evidence="1">Homodimer.</text>
</comment>
<comment type="domain">
    <text evidence="1">Possesses an unusual extended V-shaped dimeric structure with each monomer consisting of three distinct domains arranged along a curved 'spinal' alpha-helix. The N-terminal catalytic domain specifically recognizes the glutamate moiety of the substrate. The second domain is the NADPH-binding domain, and the third C-terminal domain is responsible for dimerization.</text>
</comment>
<comment type="miscellaneous">
    <text evidence="1">During catalysis, the active site Cys acts as a nucleophile attacking the alpha-carbonyl group of tRNA-bound glutamate with the formation of a thioester intermediate between enzyme and glutamate, and the concomitant release of tRNA(Glu). The thioester intermediate is finally reduced by direct hydride transfer from NADPH, to form the product GSA.</text>
</comment>
<comment type="similarity">
    <text evidence="1">Belongs to the glutamyl-tRNA reductase family.</text>
</comment>
<keyword id="KW-0521">NADP</keyword>
<keyword id="KW-0560">Oxidoreductase</keyword>
<keyword id="KW-0627">Porphyrin biosynthesis</keyword>
<keyword id="KW-1185">Reference proteome</keyword>
<proteinExistence type="inferred from homology"/>
<dbReference type="EC" id="1.2.1.70" evidence="1"/>
<dbReference type="EMBL" id="CP000112">
    <property type="protein sequence ID" value="ABB38822.1"/>
    <property type="molecule type" value="Genomic_DNA"/>
</dbReference>
<dbReference type="RefSeq" id="WP_011367928.1">
    <property type="nucleotide sequence ID" value="NC_007519.1"/>
</dbReference>
<dbReference type="SMR" id="Q30ZS4"/>
<dbReference type="STRING" id="207559.Dde_2025"/>
<dbReference type="KEGG" id="dde:Dde_2025"/>
<dbReference type="eggNOG" id="COG0373">
    <property type="taxonomic scope" value="Bacteria"/>
</dbReference>
<dbReference type="HOGENOM" id="CLU_035113_2_2_7"/>
<dbReference type="UniPathway" id="UPA00251">
    <property type="reaction ID" value="UER00316"/>
</dbReference>
<dbReference type="Proteomes" id="UP000002710">
    <property type="component" value="Chromosome"/>
</dbReference>
<dbReference type="GO" id="GO:0008883">
    <property type="term" value="F:glutamyl-tRNA reductase activity"/>
    <property type="evidence" value="ECO:0007669"/>
    <property type="project" value="UniProtKB-UniRule"/>
</dbReference>
<dbReference type="GO" id="GO:0050661">
    <property type="term" value="F:NADP binding"/>
    <property type="evidence" value="ECO:0007669"/>
    <property type="project" value="InterPro"/>
</dbReference>
<dbReference type="GO" id="GO:0019353">
    <property type="term" value="P:protoporphyrinogen IX biosynthetic process from glutamate"/>
    <property type="evidence" value="ECO:0007669"/>
    <property type="project" value="TreeGrafter"/>
</dbReference>
<dbReference type="CDD" id="cd05213">
    <property type="entry name" value="NAD_bind_Glutamyl_tRNA_reduct"/>
    <property type="match status" value="1"/>
</dbReference>
<dbReference type="FunFam" id="3.30.460.30:FF:000001">
    <property type="entry name" value="Glutamyl-tRNA reductase"/>
    <property type="match status" value="1"/>
</dbReference>
<dbReference type="FunFam" id="3.40.50.720:FF:000031">
    <property type="entry name" value="Glutamyl-tRNA reductase"/>
    <property type="match status" value="1"/>
</dbReference>
<dbReference type="Gene3D" id="3.30.460.30">
    <property type="entry name" value="Glutamyl-tRNA reductase, N-terminal domain"/>
    <property type="match status" value="1"/>
</dbReference>
<dbReference type="Gene3D" id="3.40.50.720">
    <property type="entry name" value="NAD(P)-binding Rossmann-like Domain"/>
    <property type="match status" value="1"/>
</dbReference>
<dbReference type="HAMAP" id="MF_00087">
    <property type="entry name" value="Glu_tRNA_reductase"/>
    <property type="match status" value="1"/>
</dbReference>
<dbReference type="InterPro" id="IPR000343">
    <property type="entry name" value="4pyrrol_synth_GluRdtase"/>
</dbReference>
<dbReference type="InterPro" id="IPR015896">
    <property type="entry name" value="4pyrrol_synth_GluRdtase_dimer"/>
</dbReference>
<dbReference type="InterPro" id="IPR015895">
    <property type="entry name" value="4pyrrol_synth_GluRdtase_N"/>
</dbReference>
<dbReference type="InterPro" id="IPR018214">
    <property type="entry name" value="GluRdtase_CS"/>
</dbReference>
<dbReference type="InterPro" id="IPR036453">
    <property type="entry name" value="GluRdtase_dimer_dom_sf"/>
</dbReference>
<dbReference type="InterPro" id="IPR036343">
    <property type="entry name" value="GluRdtase_N_sf"/>
</dbReference>
<dbReference type="InterPro" id="IPR036291">
    <property type="entry name" value="NAD(P)-bd_dom_sf"/>
</dbReference>
<dbReference type="InterPro" id="IPR006151">
    <property type="entry name" value="Shikm_DH/Glu-tRNA_Rdtase"/>
</dbReference>
<dbReference type="NCBIfam" id="TIGR01035">
    <property type="entry name" value="hemA"/>
    <property type="match status" value="1"/>
</dbReference>
<dbReference type="PANTHER" id="PTHR43013">
    <property type="entry name" value="GLUTAMYL-TRNA REDUCTASE"/>
    <property type="match status" value="1"/>
</dbReference>
<dbReference type="PANTHER" id="PTHR43013:SF1">
    <property type="entry name" value="GLUTAMYL-TRNA REDUCTASE"/>
    <property type="match status" value="1"/>
</dbReference>
<dbReference type="Pfam" id="PF00745">
    <property type="entry name" value="GlutR_dimer"/>
    <property type="match status" value="1"/>
</dbReference>
<dbReference type="Pfam" id="PF05201">
    <property type="entry name" value="GlutR_N"/>
    <property type="match status" value="1"/>
</dbReference>
<dbReference type="Pfam" id="PF01488">
    <property type="entry name" value="Shikimate_DH"/>
    <property type="match status" value="1"/>
</dbReference>
<dbReference type="PIRSF" id="PIRSF000445">
    <property type="entry name" value="4pyrrol_synth_GluRdtase"/>
    <property type="match status" value="1"/>
</dbReference>
<dbReference type="SUPFAM" id="SSF69742">
    <property type="entry name" value="Glutamyl tRNA-reductase catalytic, N-terminal domain"/>
    <property type="match status" value="1"/>
</dbReference>
<dbReference type="SUPFAM" id="SSF69075">
    <property type="entry name" value="Glutamyl tRNA-reductase dimerization domain"/>
    <property type="match status" value="1"/>
</dbReference>
<dbReference type="SUPFAM" id="SSF51735">
    <property type="entry name" value="NAD(P)-binding Rossmann-fold domains"/>
    <property type="match status" value="1"/>
</dbReference>
<dbReference type="PROSITE" id="PS00747">
    <property type="entry name" value="GLUTR"/>
    <property type="match status" value="1"/>
</dbReference>
<name>HEM1_OLEA2</name>
<sequence>MDQEIFIIGLNHRTADVEVREKFALTGCTSLEPAVIPLGNGISEVIILSTCNRVEIMVAGRGDDVPDTVLSLWANARGQHPEELRPYVYIHRGLAAVEHLFTVASSLDSMVLGEPQILGQLKDAYRDAVARNTTRVILNRMMHKAFSVAKRVRTETAVASSAVSISYAAVELAKRIFGEMNEYKAMLIGAGEMAELAATHLLNCGVNKIYVANRTFERGLELAKQFDGEAILFEELFTRLPEVDIVISSTGAQQAVIRAKDIRDVLKRRKNRPMFFIDIAVPRDIDPDVNNLDNVYLYDIDDLKEVVEENLSHRREEAAKAKAIVRSETEVFGRWLRSLDLQPTIVDMYSRSTEIAQEELLKTLRRIGPVDESTQKALEAMLNAVVKKIHHEPICFLKRRYEEEDSGQRYIDFARRMFNLDNEPEQPEAHKNRKRPQPDLPAGCPGKTIL</sequence>